<gene>
    <name type="primary">EDC1</name>
    <name type="ordered locus">AFR231W</name>
</gene>
<keyword id="KW-0963">Cytoplasm</keyword>
<keyword id="KW-0507">mRNA processing</keyword>
<keyword id="KW-0866">Nonsense-mediated mRNA decay</keyword>
<keyword id="KW-1185">Reference proteome</keyword>
<keyword id="KW-0694">RNA-binding</keyword>
<dbReference type="EMBL" id="AE016819">
    <property type="protein sequence ID" value="AAS53602.1"/>
    <property type="molecule type" value="Genomic_DNA"/>
</dbReference>
<dbReference type="RefSeq" id="NP_985778.1">
    <property type="nucleotide sequence ID" value="NM_211132.1"/>
</dbReference>
<dbReference type="SMR" id="Q753U4"/>
<dbReference type="STRING" id="284811.Q753U4"/>
<dbReference type="EnsemblFungi" id="AAS53602">
    <property type="protein sequence ID" value="AAS53602"/>
    <property type="gene ID" value="AGOS_AFR231W"/>
</dbReference>
<dbReference type="GeneID" id="4622041"/>
<dbReference type="KEGG" id="ago:AGOS_AFR231W"/>
<dbReference type="HOGENOM" id="CLU_826325_0_0_1"/>
<dbReference type="InParanoid" id="Q753U4"/>
<dbReference type="OMA" id="TMFINSA"/>
<dbReference type="OrthoDB" id="4069652at2759"/>
<dbReference type="Proteomes" id="UP000000591">
    <property type="component" value="Chromosome VI"/>
</dbReference>
<dbReference type="GO" id="GO:0005737">
    <property type="term" value="C:cytoplasm"/>
    <property type="evidence" value="ECO:0007669"/>
    <property type="project" value="UniProtKB-SubCell"/>
</dbReference>
<dbReference type="GO" id="GO:0003723">
    <property type="term" value="F:RNA binding"/>
    <property type="evidence" value="ECO:0007669"/>
    <property type="project" value="UniProtKB-KW"/>
</dbReference>
<dbReference type="GO" id="GO:0006397">
    <property type="term" value="P:mRNA processing"/>
    <property type="evidence" value="ECO:0007669"/>
    <property type="project" value="UniProtKB-KW"/>
</dbReference>
<dbReference type="GO" id="GO:0000184">
    <property type="term" value="P:nuclear-transcribed mRNA catabolic process, nonsense-mediated decay"/>
    <property type="evidence" value="ECO:0007669"/>
    <property type="project" value="UniProtKB-KW"/>
</dbReference>
<name>EDC1_EREGS</name>
<feature type="chain" id="PRO_0000285356" description="Enhancer of mRNA-decapping protein 1">
    <location>
        <begin position="1"/>
        <end position="355"/>
    </location>
</feature>
<feature type="region of interest" description="Disordered" evidence="2">
    <location>
        <begin position="1"/>
        <end position="146"/>
    </location>
</feature>
<feature type="region of interest" description="Disordered" evidence="2">
    <location>
        <begin position="210"/>
        <end position="230"/>
    </location>
</feature>
<feature type="region of interest" description="Disordered" evidence="2">
    <location>
        <begin position="301"/>
        <end position="330"/>
    </location>
</feature>
<feature type="compositionally biased region" description="Polar residues" evidence="2">
    <location>
        <begin position="39"/>
        <end position="49"/>
    </location>
</feature>
<feature type="compositionally biased region" description="Basic residues" evidence="2">
    <location>
        <begin position="57"/>
        <end position="67"/>
    </location>
</feature>
<feature type="compositionally biased region" description="Polar residues" evidence="2">
    <location>
        <begin position="91"/>
        <end position="110"/>
    </location>
</feature>
<feature type="compositionally biased region" description="Low complexity" evidence="2">
    <location>
        <begin position="123"/>
        <end position="142"/>
    </location>
</feature>
<organism>
    <name type="scientific">Eremothecium gossypii (strain ATCC 10895 / CBS 109.51 / FGSC 9923 / NRRL Y-1056)</name>
    <name type="common">Yeast</name>
    <name type="synonym">Ashbya gossypii</name>
    <dbReference type="NCBI Taxonomy" id="284811"/>
    <lineage>
        <taxon>Eukaryota</taxon>
        <taxon>Fungi</taxon>
        <taxon>Dikarya</taxon>
        <taxon>Ascomycota</taxon>
        <taxon>Saccharomycotina</taxon>
        <taxon>Saccharomycetes</taxon>
        <taxon>Saccharomycetales</taxon>
        <taxon>Saccharomycetaceae</taxon>
        <taxon>Eremothecium</taxon>
    </lineage>
</organism>
<proteinExistence type="inferred from homology"/>
<evidence type="ECO:0000250" key="1"/>
<evidence type="ECO:0000256" key="2">
    <source>
        <dbReference type="SAM" id="MobiDB-lite"/>
    </source>
</evidence>
<evidence type="ECO:0000305" key="3"/>
<sequence>MSSDTMFINSARLLPTENRKVKQLQRPDRKKHTRGSYAAQKQQLPNGEQPNFGHGQKQSRKRGSGRQKGRDGAAGDSANVGLTEDLKQLLSIPSGSAGSESAQKETSAGQPATGAVADRKRSVPAGGPAGKSSSEPASASSAVDGMPGLGFQSAHVPFSSPVVNHPMLAEPAATGPVLSVPFPGHVAGYMPCVNNTRVQYPLQTRNNVPMSQPMSQPMSQPMSQPMSQPMSQPISPYLPQGFQMHPQSFVGLPVAPMYPQYMSAQYQSPKQQSACQMPLRAQPPLIPSITRNALPCVSSANSTAKASVRSKGSPGSEGGSRRSQNWKSSQNVGYAGATFATDQPALSSLPKPSFV</sequence>
<accession>Q753U4</accession>
<comment type="function">
    <text evidence="1">mRNA-binding protein which stimulates mRNA decapping.</text>
</comment>
<comment type="subcellular location">
    <subcellularLocation>
        <location evidence="1">Cytoplasm</location>
    </subcellularLocation>
</comment>
<comment type="similarity">
    <text evidence="3">Belongs to the EDC family.</text>
</comment>
<protein>
    <recommendedName>
        <fullName>Enhancer of mRNA-decapping protein 1</fullName>
    </recommendedName>
</protein>
<reference key="1">
    <citation type="journal article" date="2004" name="Science">
        <title>The Ashbya gossypii genome as a tool for mapping the ancient Saccharomyces cerevisiae genome.</title>
        <authorList>
            <person name="Dietrich F.S."/>
            <person name="Voegeli S."/>
            <person name="Brachat S."/>
            <person name="Lerch A."/>
            <person name="Gates K."/>
            <person name="Steiner S."/>
            <person name="Mohr C."/>
            <person name="Poehlmann R."/>
            <person name="Luedi P."/>
            <person name="Choi S."/>
            <person name="Wing R.A."/>
            <person name="Flavier A."/>
            <person name="Gaffney T.D."/>
            <person name="Philippsen P."/>
        </authorList>
    </citation>
    <scope>NUCLEOTIDE SEQUENCE [LARGE SCALE GENOMIC DNA]</scope>
    <source>
        <strain>ATCC 10895 / CBS 109.51 / FGSC 9923 / NRRL Y-1056</strain>
    </source>
</reference>
<reference key="2">
    <citation type="journal article" date="2013" name="G3 (Bethesda)">
        <title>Genomes of Ashbya fungi isolated from insects reveal four mating-type loci, numerous translocations, lack of transposons, and distinct gene duplications.</title>
        <authorList>
            <person name="Dietrich F.S."/>
            <person name="Voegeli S."/>
            <person name="Kuo S."/>
            <person name="Philippsen P."/>
        </authorList>
    </citation>
    <scope>GENOME REANNOTATION</scope>
    <source>
        <strain>ATCC 10895 / CBS 109.51 / FGSC 9923 / NRRL Y-1056</strain>
    </source>
</reference>